<comment type="function">
    <text evidence="1">One of the primary rRNA binding proteins, it binds directly to 16S rRNA where it helps nucleate assembly of the platform of the 30S subunit by binding and bridging several RNA helices of the 16S rRNA.</text>
</comment>
<comment type="function">
    <text evidence="1">Forms an intersubunit bridge (bridge B4) with the 23S rRNA of the 50S subunit in the ribosome.</text>
</comment>
<comment type="subunit">
    <text evidence="1">Part of the 30S ribosomal subunit. Forms a bridge to the 50S subunit in the 70S ribosome, contacting the 23S rRNA.</text>
</comment>
<comment type="similarity">
    <text evidence="1">Belongs to the universal ribosomal protein uS15 family.</text>
</comment>
<comment type="sequence caution" evidence="2">
    <conflict type="erroneous initiation">
        <sequence resource="EMBL-CDS" id="ABX69421"/>
    </conflict>
</comment>
<feature type="chain" id="PRO_0000354215" description="Small ribosomal subunit protein uS15">
    <location>
        <begin position="1"/>
        <end position="89"/>
    </location>
</feature>
<accession>A9N729</accession>
<gene>
    <name evidence="1" type="primary">rpsO</name>
    <name type="ordered locus">SPAB_04095</name>
</gene>
<protein>
    <recommendedName>
        <fullName evidence="1">Small ribosomal subunit protein uS15</fullName>
    </recommendedName>
    <alternativeName>
        <fullName evidence="2">30S ribosomal protein S15</fullName>
    </alternativeName>
</protein>
<reference key="1">
    <citation type="submission" date="2007-11" db="EMBL/GenBank/DDBJ databases">
        <authorList>
            <consortium name="The Salmonella enterica serovar Paratyphi B Genome Sequencing Project"/>
            <person name="McClelland M."/>
            <person name="Sanderson E.K."/>
            <person name="Porwollik S."/>
            <person name="Spieth J."/>
            <person name="Clifton W.S."/>
            <person name="Fulton R."/>
            <person name="Cordes M."/>
            <person name="Wollam A."/>
            <person name="Shah N."/>
            <person name="Pepin K."/>
            <person name="Bhonagiri V."/>
            <person name="Nash W."/>
            <person name="Johnson M."/>
            <person name="Thiruvilangam P."/>
            <person name="Wilson R."/>
        </authorList>
    </citation>
    <scope>NUCLEOTIDE SEQUENCE [LARGE SCALE GENOMIC DNA]</scope>
    <source>
        <strain>ATCC BAA-1250 / SPB7</strain>
    </source>
</reference>
<keyword id="KW-0687">Ribonucleoprotein</keyword>
<keyword id="KW-0689">Ribosomal protein</keyword>
<keyword id="KW-0694">RNA-binding</keyword>
<keyword id="KW-0699">rRNA-binding</keyword>
<name>RS15_SALPB</name>
<dbReference type="EMBL" id="CP000886">
    <property type="protein sequence ID" value="ABX69421.1"/>
    <property type="status" value="ALT_INIT"/>
    <property type="molecule type" value="Genomic_DNA"/>
</dbReference>
<dbReference type="RefSeq" id="WP_000059465.1">
    <property type="nucleotide sequence ID" value="NC_010102.1"/>
</dbReference>
<dbReference type="SMR" id="A9N729"/>
<dbReference type="GeneID" id="93035884"/>
<dbReference type="KEGG" id="spq:SPAB_04095"/>
<dbReference type="PATRIC" id="fig|1016998.12.peg.3858"/>
<dbReference type="HOGENOM" id="CLU_148518_1_0_6"/>
<dbReference type="BioCyc" id="SENT1016998:SPAB_RS16635-MONOMER"/>
<dbReference type="Proteomes" id="UP000008556">
    <property type="component" value="Chromosome"/>
</dbReference>
<dbReference type="GO" id="GO:0022627">
    <property type="term" value="C:cytosolic small ribosomal subunit"/>
    <property type="evidence" value="ECO:0007669"/>
    <property type="project" value="TreeGrafter"/>
</dbReference>
<dbReference type="GO" id="GO:0019843">
    <property type="term" value="F:rRNA binding"/>
    <property type="evidence" value="ECO:0007669"/>
    <property type="project" value="UniProtKB-UniRule"/>
</dbReference>
<dbReference type="GO" id="GO:0003735">
    <property type="term" value="F:structural constituent of ribosome"/>
    <property type="evidence" value="ECO:0007669"/>
    <property type="project" value="InterPro"/>
</dbReference>
<dbReference type="GO" id="GO:0006412">
    <property type="term" value="P:translation"/>
    <property type="evidence" value="ECO:0007669"/>
    <property type="project" value="UniProtKB-UniRule"/>
</dbReference>
<dbReference type="CDD" id="cd00353">
    <property type="entry name" value="Ribosomal_S15p_S13e"/>
    <property type="match status" value="1"/>
</dbReference>
<dbReference type="FunFam" id="1.10.287.10:FF:000002">
    <property type="entry name" value="30S ribosomal protein S15"/>
    <property type="match status" value="1"/>
</dbReference>
<dbReference type="Gene3D" id="6.10.250.3130">
    <property type="match status" value="1"/>
</dbReference>
<dbReference type="Gene3D" id="1.10.287.10">
    <property type="entry name" value="S15/NS1, RNA-binding"/>
    <property type="match status" value="1"/>
</dbReference>
<dbReference type="HAMAP" id="MF_01343_B">
    <property type="entry name" value="Ribosomal_uS15_B"/>
    <property type="match status" value="1"/>
</dbReference>
<dbReference type="InterPro" id="IPR000589">
    <property type="entry name" value="Ribosomal_uS15"/>
</dbReference>
<dbReference type="InterPro" id="IPR005290">
    <property type="entry name" value="Ribosomal_uS15_bac-type"/>
</dbReference>
<dbReference type="InterPro" id="IPR009068">
    <property type="entry name" value="uS15_NS1_RNA-bd_sf"/>
</dbReference>
<dbReference type="NCBIfam" id="TIGR00952">
    <property type="entry name" value="S15_bact"/>
    <property type="match status" value="1"/>
</dbReference>
<dbReference type="PANTHER" id="PTHR23321">
    <property type="entry name" value="RIBOSOMAL PROTEIN S15, BACTERIAL AND ORGANELLAR"/>
    <property type="match status" value="1"/>
</dbReference>
<dbReference type="PANTHER" id="PTHR23321:SF26">
    <property type="entry name" value="SMALL RIBOSOMAL SUBUNIT PROTEIN US15M"/>
    <property type="match status" value="1"/>
</dbReference>
<dbReference type="Pfam" id="PF00312">
    <property type="entry name" value="Ribosomal_S15"/>
    <property type="match status" value="1"/>
</dbReference>
<dbReference type="SMART" id="SM01387">
    <property type="entry name" value="Ribosomal_S15"/>
    <property type="match status" value="1"/>
</dbReference>
<dbReference type="SUPFAM" id="SSF47060">
    <property type="entry name" value="S15/NS1 RNA-binding domain"/>
    <property type="match status" value="1"/>
</dbReference>
<dbReference type="PROSITE" id="PS00362">
    <property type="entry name" value="RIBOSOMAL_S15"/>
    <property type="match status" value="1"/>
</dbReference>
<organism>
    <name type="scientific">Salmonella paratyphi B (strain ATCC BAA-1250 / SPB7)</name>
    <dbReference type="NCBI Taxonomy" id="1016998"/>
    <lineage>
        <taxon>Bacteria</taxon>
        <taxon>Pseudomonadati</taxon>
        <taxon>Pseudomonadota</taxon>
        <taxon>Gammaproteobacteria</taxon>
        <taxon>Enterobacterales</taxon>
        <taxon>Enterobacteriaceae</taxon>
        <taxon>Salmonella</taxon>
    </lineage>
</organism>
<sequence length="89" mass="10198">MSLSTEATAKIVSEFGRDANDTGSTDVQVALLTAQINHLQGHFAEHKKDHHSRRGLLRMVSQRRKLLDYLKRKDVARYTALIERLGLRR</sequence>
<proteinExistence type="inferred from homology"/>
<evidence type="ECO:0000255" key="1">
    <source>
        <dbReference type="HAMAP-Rule" id="MF_01343"/>
    </source>
</evidence>
<evidence type="ECO:0000305" key="2"/>